<organism>
    <name type="scientific">Hahella chejuensis (strain KCTC 2396)</name>
    <dbReference type="NCBI Taxonomy" id="349521"/>
    <lineage>
        <taxon>Bacteria</taxon>
        <taxon>Pseudomonadati</taxon>
        <taxon>Pseudomonadota</taxon>
        <taxon>Gammaproteobacteria</taxon>
        <taxon>Oceanospirillales</taxon>
        <taxon>Hahellaceae</taxon>
        <taxon>Hahella</taxon>
    </lineage>
</organism>
<gene>
    <name evidence="1" type="primary">hisB</name>
    <name type="ordered locus">HCH_01342</name>
</gene>
<feature type="chain" id="PRO_1000010283" description="Imidazoleglycerol-phosphate dehydratase">
    <location>
        <begin position="1"/>
        <end position="197"/>
    </location>
</feature>
<evidence type="ECO:0000255" key="1">
    <source>
        <dbReference type="HAMAP-Rule" id="MF_00076"/>
    </source>
</evidence>
<protein>
    <recommendedName>
        <fullName evidence="1">Imidazoleglycerol-phosphate dehydratase</fullName>
        <shortName evidence="1">IGPD</shortName>
        <ecNumber evidence="1">4.2.1.19</ecNumber>
    </recommendedName>
</protein>
<reference key="1">
    <citation type="journal article" date="2005" name="Nucleic Acids Res.">
        <title>Genomic blueprint of Hahella chejuensis, a marine microbe producing an algicidal agent.</title>
        <authorList>
            <person name="Jeong H."/>
            <person name="Yim J.H."/>
            <person name="Lee C."/>
            <person name="Choi S.-H."/>
            <person name="Park Y.K."/>
            <person name="Yoon S.H."/>
            <person name="Hur C.-G."/>
            <person name="Kang H.-Y."/>
            <person name="Kim D."/>
            <person name="Lee H.H."/>
            <person name="Park K.H."/>
            <person name="Park S.-H."/>
            <person name="Park H.-S."/>
            <person name="Lee H.K."/>
            <person name="Oh T.K."/>
            <person name="Kim J.F."/>
        </authorList>
    </citation>
    <scope>NUCLEOTIDE SEQUENCE [LARGE SCALE GENOMIC DNA]</scope>
    <source>
        <strain>KCTC 2396</strain>
    </source>
</reference>
<sequence>MAERKAEVTRNTLETQITCKINLDGSGQARFETGVPFLDHMLDQVARHGLIDMDIVAKGDLHIDAHHTVEDIGITLGQAVAKALGDKKGIRRYGHSYVPLDEALSRVVIDFSGRPGLEMHVEFTRSMIGQFDVDLFYEFFQGFVNHAQVTLHIDNLRGRNSHHQIETVFKAFGRALRMALELDPRMAGIMPSTKGAL</sequence>
<keyword id="KW-0028">Amino-acid biosynthesis</keyword>
<keyword id="KW-0963">Cytoplasm</keyword>
<keyword id="KW-0368">Histidine biosynthesis</keyword>
<keyword id="KW-0456">Lyase</keyword>
<keyword id="KW-1185">Reference proteome</keyword>
<proteinExistence type="inferred from homology"/>
<name>HIS7_HAHCH</name>
<comment type="catalytic activity">
    <reaction evidence="1">
        <text>D-erythro-1-(imidazol-4-yl)glycerol 3-phosphate = 3-(imidazol-4-yl)-2-oxopropyl phosphate + H2O</text>
        <dbReference type="Rhea" id="RHEA:11040"/>
        <dbReference type="ChEBI" id="CHEBI:15377"/>
        <dbReference type="ChEBI" id="CHEBI:57766"/>
        <dbReference type="ChEBI" id="CHEBI:58278"/>
        <dbReference type="EC" id="4.2.1.19"/>
    </reaction>
</comment>
<comment type="pathway">
    <text evidence="1">Amino-acid biosynthesis; L-histidine biosynthesis; L-histidine from 5-phospho-alpha-D-ribose 1-diphosphate: step 6/9.</text>
</comment>
<comment type="subcellular location">
    <subcellularLocation>
        <location evidence="1">Cytoplasm</location>
    </subcellularLocation>
</comment>
<comment type="similarity">
    <text evidence="1">Belongs to the imidazoleglycerol-phosphate dehydratase family.</text>
</comment>
<accession>Q2SMB5</accession>
<dbReference type="EC" id="4.2.1.19" evidence="1"/>
<dbReference type="EMBL" id="CP000155">
    <property type="protein sequence ID" value="ABC28209.1"/>
    <property type="molecule type" value="Genomic_DNA"/>
</dbReference>
<dbReference type="RefSeq" id="WP_011395282.1">
    <property type="nucleotide sequence ID" value="NC_007645.1"/>
</dbReference>
<dbReference type="SMR" id="Q2SMB5"/>
<dbReference type="STRING" id="349521.HCH_01342"/>
<dbReference type="KEGG" id="hch:HCH_01342"/>
<dbReference type="eggNOG" id="COG0131">
    <property type="taxonomic scope" value="Bacteria"/>
</dbReference>
<dbReference type="HOGENOM" id="CLU_044308_3_0_6"/>
<dbReference type="OrthoDB" id="9790411at2"/>
<dbReference type="UniPathway" id="UPA00031">
    <property type="reaction ID" value="UER00011"/>
</dbReference>
<dbReference type="Proteomes" id="UP000000238">
    <property type="component" value="Chromosome"/>
</dbReference>
<dbReference type="GO" id="GO:0005737">
    <property type="term" value="C:cytoplasm"/>
    <property type="evidence" value="ECO:0007669"/>
    <property type="project" value="UniProtKB-SubCell"/>
</dbReference>
<dbReference type="GO" id="GO:0004424">
    <property type="term" value="F:imidazoleglycerol-phosphate dehydratase activity"/>
    <property type="evidence" value="ECO:0007669"/>
    <property type="project" value="UniProtKB-UniRule"/>
</dbReference>
<dbReference type="GO" id="GO:0000105">
    <property type="term" value="P:L-histidine biosynthetic process"/>
    <property type="evidence" value="ECO:0007669"/>
    <property type="project" value="UniProtKB-UniRule"/>
</dbReference>
<dbReference type="CDD" id="cd07914">
    <property type="entry name" value="IGPD"/>
    <property type="match status" value="1"/>
</dbReference>
<dbReference type="FunFam" id="3.30.230.40:FF:000002">
    <property type="entry name" value="Imidazoleglycerol-phosphate dehydratase"/>
    <property type="match status" value="1"/>
</dbReference>
<dbReference type="FunFam" id="3.30.230.40:FF:000003">
    <property type="entry name" value="Imidazoleglycerol-phosphate dehydratase HisB"/>
    <property type="match status" value="1"/>
</dbReference>
<dbReference type="Gene3D" id="3.30.230.40">
    <property type="entry name" value="Imidazole glycerol phosphate dehydratase, domain 1"/>
    <property type="match status" value="2"/>
</dbReference>
<dbReference type="HAMAP" id="MF_00076">
    <property type="entry name" value="HisB"/>
    <property type="match status" value="1"/>
</dbReference>
<dbReference type="InterPro" id="IPR038494">
    <property type="entry name" value="IGPD_sf"/>
</dbReference>
<dbReference type="InterPro" id="IPR000807">
    <property type="entry name" value="ImidazoleglycerolP_deHydtase"/>
</dbReference>
<dbReference type="InterPro" id="IPR020565">
    <property type="entry name" value="ImidazoleglycerP_deHydtase_CS"/>
</dbReference>
<dbReference type="InterPro" id="IPR020568">
    <property type="entry name" value="Ribosomal_Su5_D2-typ_SF"/>
</dbReference>
<dbReference type="NCBIfam" id="NF002106">
    <property type="entry name" value="PRK00951.1-1"/>
    <property type="match status" value="1"/>
</dbReference>
<dbReference type="NCBIfam" id="NF002109">
    <property type="entry name" value="PRK00951.1-5"/>
    <property type="match status" value="1"/>
</dbReference>
<dbReference type="NCBIfam" id="NF002111">
    <property type="entry name" value="PRK00951.2-1"/>
    <property type="match status" value="1"/>
</dbReference>
<dbReference type="NCBIfam" id="NF002114">
    <property type="entry name" value="PRK00951.2-4"/>
    <property type="match status" value="1"/>
</dbReference>
<dbReference type="PANTHER" id="PTHR23133:SF2">
    <property type="entry name" value="IMIDAZOLEGLYCEROL-PHOSPHATE DEHYDRATASE"/>
    <property type="match status" value="1"/>
</dbReference>
<dbReference type="PANTHER" id="PTHR23133">
    <property type="entry name" value="IMIDAZOLEGLYCEROL-PHOSPHATE DEHYDRATASE HIS7"/>
    <property type="match status" value="1"/>
</dbReference>
<dbReference type="Pfam" id="PF00475">
    <property type="entry name" value="IGPD"/>
    <property type="match status" value="1"/>
</dbReference>
<dbReference type="SUPFAM" id="SSF54211">
    <property type="entry name" value="Ribosomal protein S5 domain 2-like"/>
    <property type="match status" value="2"/>
</dbReference>
<dbReference type="PROSITE" id="PS00954">
    <property type="entry name" value="IGP_DEHYDRATASE_1"/>
    <property type="match status" value="1"/>
</dbReference>
<dbReference type="PROSITE" id="PS00955">
    <property type="entry name" value="IGP_DEHYDRATASE_2"/>
    <property type="match status" value="1"/>
</dbReference>